<evidence type="ECO:0000250" key="1"/>
<evidence type="ECO:0000255" key="2"/>
<evidence type="ECO:0000305" key="3"/>
<organism>
    <name type="scientific">Acanthamoeba polyphaga mimivirus</name>
    <name type="common">APMV</name>
    <dbReference type="NCBI Taxonomy" id="212035"/>
    <lineage>
        <taxon>Viruses</taxon>
        <taxon>Varidnaviria</taxon>
        <taxon>Bamfordvirae</taxon>
        <taxon>Nucleocytoviricota</taxon>
        <taxon>Megaviricetes</taxon>
        <taxon>Imitervirales</taxon>
        <taxon>Mimiviridae</taxon>
        <taxon>Megamimivirinae</taxon>
        <taxon>Mimivirus</taxon>
        <taxon>Mimivirus bradfordmassiliense</taxon>
    </lineage>
</organism>
<reference key="1">
    <citation type="journal article" date="2004" name="Science">
        <title>The 1.2-megabase genome sequence of Mimivirus.</title>
        <authorList>
            <person name="Raoult D."/>
            <person name="Audic S."/>
            <person name="Robert C."/>
            <person name="Abergel C."/>
            <person name="Renesto P."/>
            <person name="Ogata H."/>
            <person name="La Scola B."/>
            <person name="Susan M."/>
            <person name="Claverie J.-M."/>
        </authorList>
    </citation>
    <scope>NUCLEOTIDE SEQUENCE [LARGE SCALE GENOMIC DNA]</scope>
    <source>
        <strain>Rowbotham-Bradford</strain>
    </source>
</reference>
<sequence>MSLVPKAGYPFIIYFLDNINKYISDKTIQTYLTAFQINVDNLKVINKQFIPEAYRIIKLFTTNTTIMFAIYNYIFHGISKIGFLEKFSEEQIKYITDLETTDTKLIACAGSGKTRSVIGRIKFMVEHGLADKDEIYAITFSKHAATDFHRRIRELFPDYENFCQLKNFSTIDSMAKSILCRVKHHRSENVEILSIALRNFLKEATDEEINSITKFKIIKHLFIDEAQDLNNIQFDIALMFKKHFGTTIHLCGDPNQNIYQFRRSSNSYLMEFPAKKFELTLNFRSTQEIIDFSECLKPIATTRSVSGTNKIGPKVTIMTKQAIQIHKLILYFLKQYEKKNDLSNIAIICPTRGTGVNANTGLAMIFNFLKSNHIKVNQLYCESSSDERKRLVDRIPGHINLLTYHGTKGLEFDTVFVMDFYHSLLNIEPTYEEHNINQYLLYVATSRAISKMFICTYINNYGGYLNHWITKVDPKYYLIDSQPKIHKLTFRNEEIFDSNGVTELLEKLSEEDLYSIYELIKVNTFYEKRIFPDHTDIDRGKDEALYGIFCEELFYLCYYLNKKLEPRRFELIEKIVKSKFIIVENDLECNILKKFINTNNLTWTQFDQNKNNFRKDVIKLVEKYFSRNVELNDSIICTNDFINIVEANKIDIRDTYNRYLQPDKYQYNYNNIIFDLFYLVVVQYAYDINHYIYIK</sequence>
<organismHost>
    <name type="scientific">Acanthamoeba polyphaga</name>
    <name type="common">Amoeba</name>
    <dbReference type="NCBI Taxonomy" id="5757"/>
</organismHost>
<keyword id="KW-0067">ATP-binding</keyword>
<keyword id="KW-0347">Helicase</keyword>
<keyword id="KW-0378">Hydrolase</keyword>
<keyword id="KW-0413">Isomerase</keyword>
<keyword id="KW-0547">Nucleotide-binding</keyword>
<keyword id="KW-1185">Reference proteome</keyword>
<name>YR568_MIMIV</name>
<feature type="chain" id="PRO_0000247399" description="Putative ATP-dependent DNA helicase R568">
    <location>
        <begin position="1"/>
        <end position="695"/>
    </location>
</feature>
<feature type="domain" description="UvrD-like helicase ATP-binding">
    <location>
        <begin position="86"/>
        <end position="499"/>
    </location>
</feature>
<feature type="binding site" evidence="2">
    <location>
        <begin position="107"/>
        <end position="114"/>
    </location>
    <ligand>
        <name>ATP</name>
        <dbReference type="ChEBI" id="CHEBI:30616"/>
    </ligand>
</feature>
<dbReference type="EC" id="5.6.2.4"/>
<dbReference type="EMBL" id="AY653733">
    <property type="protein sequence ID" value="AAV50831.1"/>
    <property type="molecule type" value="Genomic_DNA"/>
</dbReference>
<dbReference type="Proteomes" id="UP000001134">
    <property type="component" value="Genome"/>
</dbReference>
<dbReference type="GO" id="GO:0043138">
    <property type="term" value="F:3'-5' DNA helicase activity"/>
    <property type="evidence" value="ECO:0007669"/>
    <property type="project" value="TreeGrafter"/>
</dbReference>
<dbReference type="GO" id="GO:0005524">
    <property type="term" value="F:ATP binding"/>
    <property type="evidence" value="ECO:0007669"/>
    <property type="project" value="UniProtKB-KW"/>
</dbReference>
<dbReference type="GO" id="GO:0016887">
    <property type="term" value="F:ATP hydrolysis activity"/>
    <property type="evidence" value="ECO:0007669"/>
    <property type="project" value="RHEA"/>
</dbReference>
<dbReference type="GO" id="GO:0003677">
    <property type="term" value="F:DNA binding"/>
    <property type="evidence" value="ECO:0007669"/>
    <property type="project" value="InterPro"/>
</dbReference>
<dbReference type="GO" id="GO:0000725">
    <property type="term" value="P:recombinational repair"/>
    <property type="evidence" value="ECO:0007669"/>
    <property type="project" value="TreeGrafter"/>
</dbReference>
<dbReference type="CDD" id="cd17932">
    <property type="entry name" value="DEXQc_UvrD"/>
    <property type="match status" value="1"/>
</dbReference>
<dbReference type="Gene3D" id="3.40.50.300">
    <property type="entry name" value="P-loop containing nucleotide triphosphate hydrolases"/>
    <property type="match status" value="2"/>
</dbReference>
<dbReference type="InterPro" id="IPR014017">
    <property type="entry name" value="DNA_helicase_UvrD-like_C"/>
</dbReference>
<dbReference type="InterPro" id="IPR000212">
    <property type="entry name" value="DNA_helicase_UvrD/REP"/>
</dbReference>
<dbReference type="InterPro" id="IPR027417">
    <property type="entry name" value="P-loop_NTPase"/>
</dbReference>
<dbReference type="InterPro" id="IPR014016">
    <property type="entry name" value="UvrD-like_ATP-bd"/>
</dbReference>
<dbReference type="PANTHER" id="PTHR11070:SF2">
    <property type="entry name" value="ATP-DEPENDENT DNA HELICASE SRS2"/>
    <property type="match status" value="1"/>
</dbReference>
<dbReference type="PANTHER" id="PTHR11070">
    <property type="entry name" value="UVRD / RECB / PCRA DNA HELICASE FAMILY MEMBER"/>
    <property type="match status" value="1"/>
</dbReference>
<dbReference type="Pfam" id="PF00580">
    <property type="entry name" value="UvrD-helicase"/>
    <property type="match status" value="2"/>
</dbReference>
<dbReference type="Pfam" id="PF13361">
    <property type="entry name" value="UvrD_C"/>
    <property type="match status" value="1"/>
</dbReference>
<dbReference type="SUPFAM" id="SSF52540">
    <property type="entry name" value="P-loop containing nucleoside triphosphate hydrolases"/>
    <property type="match status" value="1"/>
</dbReference>
<comment type="function">
    <text evidence="1">ATP-dependent DNA helicase.</text>
</comment>
<comment type="catalytic activity">
    <reaction>
        <text>Couples ATP hydrolysis with the unwinding of duplex DNA by translocating in the 3'-5' direction.</text>
        <dbReference type="EC" id="5.6.2.4"/>
    </reaction>
</comment>
<comment type="catalytic activity">
    <reaction>
        <text>ATP + H2O = ADP + phosphate + H(+)</text>
        <dbReference type="Rhea" id="RHEA:13065"/>
        <dbReference type="ChEBI" id="CHEBI:15377"/>
        <dbReference type="ChEBI" id="CHEBI:15378"/>
        <dbReference type="ChEBI" id="CHEBI:30616"/>
        <dbReference type="ChEBI" id="CHEBI:43474"/>
        <dbReference type="ChEBI" id="CHEBI:456216"/>
        <dbReference type="EC" id="5.6.2.4"/>
    </reaction>
</comment>
<comment type="similarity">
    <text evidence="3">Belongs to the helicase family. UvrD subfamily.</text>
</comment>
<gene>
    <name type="ordered locus">MIMI_R568</name>
</gene>
<protein>
    <recommendedName>
        <fullName>Putative ATP-dependent DNA helicase R568</fullName>
        <ecNumber>5.6.2.4</ecNumber>
    </recommendedName>
    <alternativeName>
        <fullName evidence="3">DNA 3'-5' helicase R568</fullName>
    </alternativeName>
</protein>
<proteinExistence type="inferred from homology"/>
<accession>Q5UR49</accession>